<organism>
    <name type="scientific">Acinetobacter baumannii (strain AYE)</name>
    <dbReference type="NCBI Taxonomy" id="509173"/>
    <lineage>
        <taxon>Bacteria</taxon>
        <taxon>Pseudomonadati</taxon>
        <taxon>Pseudomonadota</taxon>
        <taxon>Gammaproteobacteria</taxon>
        <taxon>Moraxellales</taxon>
        <taxon>Moraxellaceae</taxon>
        <taxon>Acinetobacter</taxon>
        <taxon>Acinetobacter calcoaceticus/baumannii complex</taxon>
    </lineage>
</organism>
<feature type="chain" id="PRO_1000098470" description="1-deoxy-D-xylulose 5-phosphate reductoisomerase">
    <location>
        <begin position="1"/>
        <end position="398"/>
    </location>
</feature>
<feature type="binding site" evidence="1">
    <location>
        <position position="11"/>
    </location>
    <ligand>
        <name>NADPH</name>
        <dbReference type="ChEBI" id="CHEBI:57783"/>
    </ligand>
</feature>
<feature type="binding site" evidence="1">
    <location>
        <position position="12"/>
    </location>
    <ligand>
        <name>NADPH</name>
        <dbReference type="ChEBI" id="CHEBI:57783"/>
    </ligand>
</feature>
<feature type="binding site" evidence="1">
    <location>
        <position position="13"/>
    </location>
    <ligand>
        <name>NADPH</name>
        <dbReference type="ChEBI" id="CHEBI:57783"/>
    </ligand>
</feature>
<feature type="binding site" evidence="1">
    <location>
        <position position="14"/>
    </location>
    <ligand>
        <name>NADPH</name>
        <dbReference type="ChEBI" id="CHEBI:57783"/>
    </ligand>
</feature>
<feature type="binding site" evidence="1">
    <location>
        <position position="125"/>
    </location>
    <ligand>
        <name>NADPH</name>
        <dbReference type="ChEBI" id="CHEBI:57783"/>
    </ligand>
</feature>
<feature type="binding site" evidence="1">
    <location>
        <position position="126"/>
    </location>
    <ligand>
        <name>1-deoxy-D-xylulose 5-phosphate</name>
        <dbReference type="ChEBI" id="CHEBI:57792"/>
    </ligand>
</feature>
<feature type="binding site" evidence="1">
    <location>
        <position position="127"/>
    </location>
    <ligand>
        <name>NADPH</name>
        <dbReference type="ChEBI" id="CHEBI:57783"/>
    </ligand>
</feature>
<feature type="binding site" evidence="1">
    <location>
        <position position="151"/>
    </location>
    <ligand>
        <name>Mn(2+)</name>
        <dbReference type="ChEBI" id="CHEBI:29035"/>
    </ligand>
</feature>
<feature type="binding site" evidence="1">
    <location>
        <position position="152"/>
    </location>
    <ligand>
        <name>1-deoxy-D-xylulose 5-phosphate</name>
        <dbReference type="ChEBI" id="CHEBI:57792"/>
    </ligand>
</feature>
<feature type="binding site" evidence="1">
    <location>
        <position position="153"/>
    </location>
    <ligand>
        <name>1-deoxy-D-xylulose 5-phosphate</name>
        <dbReference type="ChEBI" id="CHEBI:57792"/>
    </ligand>
</feature>
<feature type="binding site" evidence="1">
    <location>
        <position position="153"/>
    </location>
    <ligand>
        <name>Mn(2+)</name>
        <dbReference type="ChEBI" id="CHEBI:29035"/>
    </ligand>
</feature>
<feature type="binding site" evidence="1">
    <location>
        <position position="186"/>
    </location>
    <ligand>
        <name>1-deoxy-D-xylulose 5-phosphate</name>
        <dbReference type="ChEBI" id="CHEBI:57792"/>
    </ligand>
</feature>
<feature type="binding site" evidence="1">
    <location>
        <position position="209"/>
    </location>
    <ligand>
        <name>1-deoxy-D-xylulose 5-phosphate</name>
        <dbReference type="ChEBI" id="CHEBI:57792"/>
    </ligand>
</feature>
<feature type="binding site" evidence="1">
    <location>
        <position position="215"/>
    </location>
    <ligand>
        <name>NADPH</name>
        <dbReference type="ChEBI" id="CHEBI:57783"/>
    </ligand>
</feature>
<feature type="binding site" evidence="1">
    <location>
        <position position="222"/>
    </location>
    <ligand>
        <name>1-deoxy-D-xylulose 5-phosphate</name>
        <dbReference type="ChEBI" id="CHEBI:57792"/>
    </ligand>
</feature>
<feature type="binding site" evidence="1">
    <location>
        <position position="227"/>
    </location>
    <ligand>
        <name>1-deoxy-D-xylulose 5-phosphate</name>
        <dbReference type="ChEBI" id="CHEBI:57792"/>
    </ligand>
</feature>
<feature type="binding site" evidence="1">
    <location>
        <position position="228"/>
    </location>
    <ligand>
        <name>1-deoxy-D-xylulose 5-phosphate</name>
        <dbReference type="ChEBI" id="CHEBI:57792"/>
    </ligand>
</feature>
<feature type="binding site" evidence="1">
    <location>
        <position position="231"/>
    </location>
    <ligand>
        <name>1-deoxy-D-xylulose 5-phosphate</name>
        <dbReference type="ChEBI" id="CHEBI:57792"/>
    </ligand>
</feature>
<feature type="binding site" evidence="1">
    <location>
        <position position="231"/>
    </location>
    <ligand>
        <name>Mn(2+)</name>
        <dbReference type="ChEBI" id="CHEBI:29035"/>
    </ligand>
</feature>
<gene>
    <name evidence="1" type="primary">dxr</name>
    <name type="ordered locus">ABAYE1581</name>
</gene>
<accession>B0V6F3</accession>
<comment type="function">
    <text evidence="1">Catalyzes the NADPH-dependent rearrangement and reduction of 1-deoxy-D-xylulose-5-phosphate (DXP) to 2-C-methyl-D-erythritol 4-phosphate (MEP).</text>
</comment>
<comment type="catalytic activity">
    <reaction evidence="1">
        <text>2-C-methyl-D-erythritol 4-phosphate + NADP(+) = 1-deoxy-D-xylulose 5-phosphate + NADPH + H(+)</text>
        <dbReference type="Rhea" id="RHEA:13717"/>
        <dbReference type="ChEBI" id="CHEBI:15378"/>
        <dbReference type="ChEBI" id="CHEBI:57783"/>
        <dbReference type="ChEBI" id="CHEBI:57792"/>
        <dbReference type="ChEBI" id="CHEBI:58262"/>
        <dbReference type="ChEBI" id="CHEBI:58349"/>
        <dbReference type="EC" id="1.1.1.267"/>
    </reaction>
    <physiologicalReaction direction="right-to-left" evidence="1">
        <dbReference type="Rhea" id="RHEA:13719"/>
    </physiologicalReaction>
</comment>
<comment type="cofactor">
    <cofactor evidence="1">
        <name>Mg(2+)</name>
        <dbReference type="ChEBI" id="CHEBI:18420"/>
    </cofactor>
    <cofactor evidence="1">
        <name>Mn(2+)</name>
        <dbReference type="ChEBI" id="CHEBI:29035"/>
    </cofactor>
</comment>
<comment type="pathway">
    <text evidence="1">Isoprenoid biosynthesis; isopentenyl diphosphate biosynthesis via DXP pathway; isopentenyl diphosphate from 1-deoxy-D-xylulose 5-phosphate: step 1/6.</text>
</comment>
<comment type="similarity">
    <text evidence="1">Belongs to the DXR family.</text>
</comment>
<sequence>MTQSVCILGVTGSIGRSTLKILGQHPDKYSVFAVSAHSRISELVEICKQFRPKVVVVPEQKIAELKTLFAQQNISDIDVLAGQEGLVDIASHTDVDIVMAAIVGAAGLLPTLAAVKAGKRVLLANKEALVMSGEIMMQAARDHQALLLPVDSEHNAIFQSLPHNYLQADRTGQPQLGVSKILLTASGGPFLNHSLEQLVHVTPQQACKHPNWSMGQKISVDSATLMNKGLELIEACHLFSISEHFVTVVVHPQSIIHSMVQYVDGSTLAQMGNPDMCTPIAHALAWPERLQTNVPALDLFEYSQLNFQAPDTQKFPALNLARQAMRAGGLAPTILNAANEIAVEAFLMERIGFTSIPQVVEHTLEKLENAAAESIECILDKDKVARSVAQQYISSIGG</sequence>
<protein>
    <recommendedName>
        <fullName evidence="1">1-deoxy-D-xylulose 5-phosphate reductoisomerase</fullName>
        <shortName evidence="1">DXP reductoisomerase</shortName>
        <ecNumber evidence="1">1.1.1.267</ecNumber>
    </recommendedName>
    <alternativeName>
        <fullName evidence="1">1-deoxyxylulose-5-phosphate reductoisomerase</fullName>
    </alternativeName>
    <alternativeName>
        <fullName evidence="1">2-C-methyl-D-erythritol 4-phosphate synthase</fullName>
    </alternativeName>
</protein>
<name>DXR_ACIBY</name>
<proteinExistence type="inferred from homology"/>
<dbReference type="EC" id="1.1.1.267" evidence="1"/>
<dbReference type="EMBL" id="CU459141">
    <property type="protein sequence ID" value="CAM86478.1"/>
    <property type="molecule type" value="Genomic_DNA"/>
</dbReference>
<dbReference type="SMR" id="B0V6F3"/>
<dbReference type="EnsemblBacteria" id="CAM86478">
    <property type="protein sequence ID" value="CAM86478"/>
    <property type="gene ID" value="ABAYE1581"/>
</dbReference>
<dbReference type="KEGG" id="aby:ABAYE1581"/>
<dbReference type="HOGENOM" id="CLU_035714_4_0_6"/>
<dbReference type="UniPathway" id="UPA00056">
    <property type="reaction ID" value="UER00092"/>
</dbReference>
<dbReference type="GO" id="GO:0030604">
    <property type="term" value="F:1-deoxy-D-xylulose-5-phosphate reductoisomerase activity"/>
    <property type="evidence" value="ECO:0007669"/>
    <property type="project" value="UniProtKB-UniRule"/>
</dbReference>
<dbReference type="GO" id="GO:0030145">
    <property type="term" value="F:manganese ion binding"/>
    <property type="evidence" value="ECO:0007669"/>
    <property type="project" value="TreeGrafter"/>
</dbReference>
<dbReference type="GO" id="GO:0070402">
    <property type="term" value="F:NADPH binding"/>
    <property type="evidence" value="ECO:0007669"/>
    <property type="project" value="InterPro"/>
</dbReference>
<dbReference type="GO" id="GO:0051484">
    <property type="term" value="P:isopentenyl diphosphate biosynthetic process, methylerythritol 4-phosphate pathway involved in terpenoid biosynthetic process"/>
    <property type="evidence" value="ECO:0007669"/>
    <property type="project" value="TreeGrafter"/>
</dbReference>
<dbReference type="FunFam" id="3.40.50.720:FF:000045">
    <property type="entry name" value="1-deoxy-D-xylulose 5-phosphate reductoisomerase"/>
    <property type="match status" value="1"/>
</dbReference>
<dbReference type="Gene3D" id="1.10.1740.10">
    <property type="match status" value="1"/>
</dbReference>
<dbReference type="Gene3D" id="3.40.50.720">
    <property type="entry name" value="NAD(P)-binding Rossmann-like Domain"/>
    <property type="match status" value="1"/>
</dbReference>
<dbReference type="HAMAP" id="MF_00183">
    <property type="entry name" value="DXP_reductoisom"/>
    <property type="match status" value="1"/>
</dbReference>
<dbReference type="InterPro" id="IPR003821">
    <property type="entry name" value="DXP_reductoisomerase"/>
</dbReference>
<dbReference type="InterPro" id="IPR013644">
    <property type="entry name" value="DXP_reductoisomerase_C"/>
</dbReference>
<dbReference type="InterPro" id="IPR013512">
    <property type="entry name" value="DXP_reductoisomerase_N"/>
</dbReference>
<dbReference type="InterPro" id="IPR026877">
    <property type="entry name" value="DXPR_C"/>
</dbReference>
<dbReference type="InterPro" id="IPR036169">
    <property type="entry name" value="DXPR_C_sf"/>
</dbReference>
<dbReference type="InterPro" id="IPR036291">
    <property type="entry name" value="NAD(P)-bd_dom_sf"/>
</dbReference>
<dbReference type="NCBIfam" id="TIGR00243">
    <property type="entry name" value="Dxr"/>
    <property type="match status" value="1"/>
</dbReference>
<dbReference type="NCBIfam" id="NF003938">
    <property type="entry name" value="PRK05447.1-1"/>
    <property type="match status" value="1"/>
</dbReference>
<dbReference type="NCBIfam" id="NF009114">
    <property type="entry name" value="PRK12464.1"/>
    <property type="match status" value="1"/>
</dbReference>
<dbReference type="PANTHER" id="PTHR30525">
    <property type="entry name" value="1-DEOXY-D-XYLULOSE 5-PHOSPHATE REDUCTOISOMERASE"/>
    <property type="match status" value="1"/>
</dbReference>
<dbReference type="PANTHER" id="PTHR30525:SF0">
    <property type="entry name" value="1-DEOXY-D-XYLULOSE 5-PHOSPHATE REDUCTOISOMERASE, CHLOROPLASTIC"/>
    <property type="match status" value="1"/>
</dbReference>
<dbReference type="Pfam" id="PF08436">
    <property type="entry name" value="DXP_redisom_C"/>
    <property type="match status" value="1"/>
</dbReference>
<dbReference type="Pfam" id="PF02670">
    <property type="entry name" value="DXP_reductoisom"/>
    <property type="match status" value="1"/>
</dbReference>
<dbReference type="Pfam" id="PF13288">
    <property type="entry name" value="DXPR_C"/>
    <property type="match status" value="1"/>
</dbReference>
<dbReference type="PIRSF" id="PIRSF006205">
    <property type="entry name" value="Dxp_reductismrs"/>
    <property type="match status" value="1"/>
</dbReference>
<dbReference type="SUPFAM" id="SSF69055">
    <property type="entry name" value="1-deoxy-D-xylulose-5-phosphate reductoisomerase, C-terminal domain"/>
    <property type="match status" value="1"/>
</dbReference>
<dbReference type="SUPFAM" id="SSF55347">
    <property type="entry name" value="Glyceraldehyde-3-phosphate dehydrogenase-like, C-terminal domain"/>
    <property type="match status" value="1"/>
</dbReference>
<dbReference type="SUPFAM" id="SSF51735">
    <property type="entry name" value="NAD(P)-binding Rossmann-fold domains"/>
    <property type="match status" value="1"/>
</dbReference>
<keyword id="KW-0414">Isoprene biosynthesis</keyword>
<keyword id="KW-0464">Manganese</keyword>
<keyword id="KW-0479">Metal-binding</keyword>
<keyword id="KW-0521">NADP</keyword>
<keyword id="KW-0560">Oxidoreductase</keyword>
<reference key="1">
    <citation type="journal article" date="2008" name="PLoS ONE">
        <title>Comparative analysis of Acinetobacters: three genomes for three lifestyles.</title>
        <authorList>
            <person name="Vallenet D."/>
            <person name="Nordmann P."/>
            <person name="Barbe V."/>
            <person name="Poirel L."/>
            <person name="Mangenot S."/>
            <person name="Bataille E."/>
            <person name="Dossat C."/>
            <person name="Gas S."/>
            <person name="Kreimeyer A."/>
            <person name="Lenoble P."/>
            <person name="Oztas S."/>
            <person name="Poulain J."/>
            <person name="Segurens B."/>
            <person name="Robert C."/>
            <person name="Abergel C."/>
            <person name="Claverie J.-M."/>
            <person name="Raoult D."/>
            <person name="Medigue C."/>
            <person name="Weissenbach J."/>
            <person name="Cruveiller S."/>
        </authorList>
    </citation>
    <scope>NUCLEOTIDE SEQUENCE [LARGE SCALE GENOMIC DNA]</scope>
    <source>
        <strain>AYE</strain>
    </source>
</reference>
<evidence type="ECO:0000255" key="1">
    <source>
        <dbReference type="HAMAP-Rule" id="MF_00183"/>
    </source>
</evidence>